<reference key="1">
    <citation type="journal article" date="2004" name="Science">
        <title>The Ashbya gossypii genome as a tool for mapping the ancient Saccharomyces cerevisiae genome.</title>
        <authorList>
            <person name="Dietrich F.S."/>
            <person name="Voegeli S."/>
            <person name="Brachat S."/>
            <person name="Lerch A."/>
            <person name="Gates K."/>
            <person name="Steiner S."/>
            <person name="Mohr C."/>
            <person name="Poehlmann R."/>
            <person name="Luedi P."/>
            <person name="Choi S."/>
            <person name="Wing R.A."/>
            <person name="Flavier A."/>
            <person name="Gaffney T.D."/>
            <person name="Philippsen P."/>
        </authorList>
    </citation>
    <scope>NUCLEOTIDE SEQUENCE [LARGE SCALE GENOMIC DNA]</scope>
    <source>
        <strain>ATCC 10895 / CBS 109.51 / FGSC 9923 / NRRL Y-1056</strain>
    </source>
</reference>
<reference key="2">
    <citation type="journal article" date="2013" name="G3 (Bethesda)">
        <title>Genomes of Ashbya fungi isolated from insects reveal four mating-type loci, numerous translocations, lack of transposons, and distinct gene duplications.</title>
        <authorList>
            <person name="Dietrich F.S."/>
            <person name="Voegeli S."/>
            <person name="Kuo S."/>
            <person name="Philippsen P."/>
        </authorList>
    </citation>
    <scope>GENOME REANNOTATION</scope>
    <source>
        <strain>ATCC 10895 / CBS 109.51 / FGSC 9923 / NRRL Y-1056</strain>
    </source>
</reference>
<feature type="chain" id="PRO_0000409540" description="RNA annealing protein YRA2">
    <location>
        <begin position="1"/>
        <end position="196"/>
    </location>
</feature>
<feature type="domain" description="RRM">
    <location>
        <begin position="63"/>
        <end position="137"/>
    </location>
</feature>
<feature type="region of interest" description="Disordered" evidence="2">
    <location>
        <begin position="1"/>
        <end position="63"/>
    </location>
</feature>
<feature type="region of interest" description="Disordered" evidence="2">
    <location>
        <begin position="143"/>
        <end position="196"/>
    </location>
</feature>
<feature type="compositionally biased region" description="Basic and acidic residues" evidence="2">
    <location>
        <begin position="149"/>
        <end position="159"/>
    </location>
</feature>
<dbReference type="EMBL" id="AE016818">
    <property type="protein sequence ID" value="AAS53128.2"/>
    <property type="molecule type" value="Genomic_DNA"/>
</dbReference>
<dbReference type="RefSeq" id="NP_985304.2">
    <property type="nucleotide sequence ID" value="NM_210658.2"/>
</dbReference>
<dbReference type="SMR" id="Q755R9"/>
<dbReference type="FunCoup" id="Q755R9">
    <property type="interactions" value="203"/>
</dbReference>
<dbReference type="STRING" id="284811.Q755R9"/>
<dbReference type="EnsemblFungi" id="AAS53128">
    <property type="protein sequence ID" value="AAS53128"/>
    <property type="gene ID" value="AGOS_AER449W"/>
</dbReference>
<dbReference type="GeneID" id="4621525"/>
<dbReference type="KEGG" id="ago:AGOS_AER449W"/>
<dbReference type="eggNOG" id="ENOG502S444">
    <property type="taxonomic scope" value="Eukaryota"/>
</dbReference>
<dbReference type="HOGENOM" id="CLU_111217_0_0_1"/>
<dbReference type="InParanoid" id="Q755R9"/>
<dbReference type="OMA" id="KQTAQEH"/>
<dbReference type="OrthoDB" id="1099063at2759"/>
<dbReference type="Proteomes" id="UP000000591">
    <property type="component" value="Chromosome V"/>
</dbReference>
<dbReference type="GO" id="GO:0005634">
    <property type="term" value="C:nucleus"/>
    <property type="evidence" value="ECO:0007669"/>
    <property type="project" value="UniProtKB-SubCell"/>
</dbReference>
<dbReference type="GO" id="GO:0003677">
    <property type="term" value="F:DNA binding"/>
    <property type="evidence" value="ECO:0007669"/>
    <property type="project" value="UniProtKB-KW"/>
</dbReference>
<dbReference type="GO" id="GO:0003723">
    <property type="term" value="F:RNA binding"/>
    <property type="evidence" value="ECO:0007669"/>
    <property type="project" value="UniProtKB-KW"/>
</dbReference>
<dbReference type="GO" id="GO:0016973">
    <property type="term" value="P:poly(A)+ mRNA export from nucleus"/>
    <property type="evidence" value="ECO:0007669"/>
    <property type="project" value="EnsemblFungi"/>
</dbReference>
<dbReference type="CDD" id="cd12295">
    <property type="entry name" value="RRM_YRA2"/>
    <property type="match status" value="1"/>
</dbReference>
<dbReference type="Gene3D" id="3.30.70.330">
    <property type="match status" value="1"/>
</dbReference>
<dbReference type="InterPro" id="IPR025715">
    <property type="entry name" value="FoP_C"/>
</dbReference>
<dbReference type="InterPro" id="IPR012677">
    <property type="entry name" value="Nucleotide-bd_a/b_plait_sf"/>
</dbReference>
<dbReference type="InterPro" id="IPR035979">
    <property type="entry name" value="RBD_domain_sf"/>
</dbReference>
<dbReference type="InterPro" id="IPR034396">
    <property type="entry name" value="Yra2_RRM"/>
</dbReference>
<dbReference type="Pfam" id="PF13865">
    <property type="entry name" value="FoP_duplication"/>
    <property type="match status" value="1"/>
</dbReference>
<dbReference type="SUPFAM" id="SSF54928">
    <property type="entry name" value="RNA-binding domain, RBD"/>
    <property type="match status" value="1"/>
</dbReference>
<organism>
    <name type="scientific">Eremothecium gossypii (strain ATCC 10895 / CBS 109.51 / FGSC 9923 / NRRL Y-1056)</name>
    <name type="common">Yeast</name>
    <name type="synonym">Ashbya gossypii</name>
    <dbReference type="NCBI Taxonomy" id="284811"/>
    <lineage>
        <taxon>Eukaryota</taxon>
        <taxon>Fungi</taxon>
        <taxon>Dikarya</taxon>
        <taxon>Ascomycota</taxon>
        <taxon>Saccharomycotina</taxon>
        <taxon>Saccharomycetes</taxon>
        <taxon>Saccharomycetales</taxon>
        <taxon>Saccharomycetaceae</taxon>
        <taxon>Eremothecium</taxon>
    </lineage>
</organism>
<evidence type="ECO:0000250" key="1"/>
<evidence type="ECO:0000256" key="2">
    <source>
        <dbReference type="SAM" id="MobiDB-lite"/>
    </source>
</evidence>
<evidence type="ECO:0000305" key="3"/>
<name>YRA2_EREGS</name>
<gene>
    <name type="primary">YRA2</name>
    <name type="ordered locus">AER449W</name>
</gene>
<accession>Q755R9</accession>
<sequence>MSVDEHLNQGTGEKQYRRRDLRNGLASRMGLGESTYRAREYGPSRRSRFRDRRDARPPPPTHQRVRFLNIPLDVSDYEIDDLLKDLPKPLYSKFYDHEDSRSAVFEFEDHSILDKCVELYNGLELHGAKITVEIFEQQGRFADSTRTNRSTDHVEKEAGFKTGRPRGKARATKKEKPPQPTLEDLDAELDAYMNGN</sequence>
<keyword id="KW-0238">DNA-binding</keyword>
<keyword id="KW-0509">mRNA transport</keyword>
<keyword id="KW-0539">Nucleus</keyword>
<keyword id="KW-1185">Reference proteome</keyword>
<keyword id="KW-0694">RNA-binding</keyword>
<keyword id="KW-0813">Transport</keyword>
<proteinExistence type="inferred from homology"/>
<protein>
    <recommendedName>
        <fullName>RNA annealing protein YRA2</fullName>
    </recommendedName>
</protein>
<comment type="function">
    <text evidence="1">Involved in export of poly(A) mRNAs from the nucleus. Recruited to the coding sequences as well as poly-A sites of active genes (By similarity).</text>
</comment>
<comment type="subunit">
    <text evidence="1">Associates with mRNPs.</text>
</comment>
<comment type="subcellular location">
    <subcellularLocation>
        <location evidence="1">Nucleus</location>
    </subcellularLocation>
</comment>
<comment type="similarity">
    <text evidence="3">Belongs to the YRA1 family.</text>
</comment>